<protein>
    <recommendedName>
        <fullName evidence="1">Bifunctional protein FolD</fullName>
    </recommendedName>
    <domain>
        <recommendedName>
            <fullName evidence="1">Methylenetetrahydrofolate dehydrogenase</fullName>
            <ecNumber evidence="1">1.5.1.5</ecNumber>
        </recommendedName>
    </domain>
    <domain>
        <recommendedName>
            <fullName evidence="1">Methenyltetrahydrofolate cyclohydrolase</fullName>
            <ecNumber evidence="1">3.5.4.9</ecNumber>
        </recommendedName>
    </domain>
</protein>
<evidence type="ECO:0000255" key="1">
    <source>
        <dbReference type="HAMAP-Rule" id="MF_01576"/>
    </source>
</evidence>
<keyword id="KW-0028">Amino-acid biosynthesis</keyword>
<keyword id="KW-0368">Histidine biosynthesis</keyword>
<keyword id="KW-0378">Hydrolase</keyword>
<keyword id="KW-0486">Methionine biosynthesis</keyword>
<keyword id="KW-0511">Multifunctional enzyme</keyword>
<keyword id="KW-0521">NADP</keyword>
<keyword id="KW-0554">One-carbon metabolism</keyword>
<keyword id="KW-0560">Oxidoreductase</keyword>
<keyword id="KW-0658">Purine biosynthesis</keyword>
<keyword id="KW-1185">Reference proteome</keyword>
<comment type="function">
    <text evidence="1">Catalyzes the oxidation of 5,10-methylenetetrahydrofolate to 5,10-methenyltetrahydrofolate and then the hydrolysis of 5,10-methenyltetrahydrofolate to 10-formyltetrahydrofolate.</text>
</comment>
<comment type="catalytic activity">
    <reaction evidence="1">
        <text>(6R)-5,10-methylene-5,6,7,8-tetrahydrofolate + NADP(+) = (6R)-5,10-methenyltetrahydrofolate + NADPH</text>
        <dbReference type="Rhea" id="RHEA:22812"/>
        <dbReference type="ChEBI" id="CHEBI:15636"/>
        <dbReference type="ChEBI" id="CHEBI:57455"/>
        <dbReference type="ChEBI" id="CHEBI:57783"/>
        <dbReference type="ChEBI" id="CHEBI:58349"/>
        <dbReference type="EC" id="1.5.1.5"/>
    </reaction>
</comment>
<comment type="catalytic activity">
    <reaction evidence="1">
        <text>(6R)-5,10-methenyltetrahydrofolate + H2O = (6R)-10-formyltetrahydrofolate + H(+)</text>
        <dbReference type="Rhea" id="RHEA:23700"/>
        <dbReference type="ChEBI" id="CHEBI:15377"/>
        <dbReference type="ChEBI" id="CHEBI:15378"/>
        <dbReference type="ChEBI" id="CHEBI:57455"/>
        <dbReference type="ChEBI" id="CHEBI:195366"/>
        <dbReference type="EC" id="3.5.4.9"/>
    </reaction>
</comment>
<comment type="pathway">
    <text evidence="1">One-carbon metabolism; tetrahydrofolate interconversion.</text>
</comment>
<comment type="subunit">
    <text evidence="1">Homodimer.</text>
</comment>
<comment type="similarity">
    <text evidence="1">Belongs to the tetrahydrofolate dehydrogenase/cyclohydrolase family.</text>
</comment>
<dbReference type="EC" id="1.5.1.5" evidence="1"/>
<dbReference type="EC" id="3.5.4.9" evidence="1"/>
<dbReference type="EMBL" id="CP000020">
    <property type="protein sequence ID" value="AAW86265.1"/>
    <property type="molecule type" value="Genomic_DNA"/>
</dbReference>
<dbReference type="RefSeq" id="WP_005420192.1">
    <property type="nucleotide sequence ID" value="NZ_CAWLES010000001.1"/>
</dbReference>
<dbReference type="RefSeq" id="YP_205153.1">
    <property type="nucleotide sequence ID" value="NC_006840.2"/>
</dbReference>
<dbReference type="SMR" id="Q5E3Y1"/>
<dbReference type="STRING" id="312309.VF_1770"/>
<dbReference type="EnsemblBacteria" id="AAW86265">
    <property type="protein sequence ID" value="AAW86265"/>
    <property type="gene ID" value="VF_1770"/>
</dbReference>
<dbReference type="GeneID" id="54164470"/>
<dbReference type="KEGG" id="vfi:VF_1770"/>
<dbReference type="PATRIC" id="fig|312309.11.peg.1796"/>
<dbReference type="eggNOG" id="COG0190">
    <property type="taxonomic scope" value="Bacteria"/>
</dbReference>
<dbReference type="HOGENOM" id="CLU_034045_2_1_6"/>
<dbReference type="OrthoDB" id="9803580at2"/>
<dbReference type="UniPathway" id="UPA00193"/>
<dbReference type="Proteomes" id="UP000000537">
    <property type="component" value="Chromosome I"/>
</dbReference>
<dbReference type="GO" id="GO:0005829">
    <property type="term" value="C:cytosol"/>
    <property type="evidence" value="ECO:0007669"/>
    <property type="project" value="TreeGrafter"/>
</dbReference>
<dbReference type="GO" id="GO:0004477">
    <property type="term" value="F:methenyltetrahydrofolate cyclohydrolase activity"/>
    <property type="evidence" value="ECO:0007669"/>
    <property type="project" value="UniProtKB-UniRule"/>
</dbReference>
<dbReference type="GO" id="GO:0004488">
    <property type="term" value="F:methylenetetrahydrofolate dehydrogenase (NADP+) activity"/>
    <property type="evidence" value="ECO:0007669"/>
    <property type="project" value="UniProtKB-UniRule"/>
</dbReference>
<dbReference type="GO" id="GO:0000105">
    <property type="term" value="P:L-histidine biosynthetic process"/>
    <property type="evidence" value="ECO:0007669"/>
    <property type="project" value="UniProtKB-KW"/>
</dbReference>
<dbReference type="GO" id="GO:0009086">
    <property type="term" value="P:methionine biosynthetic process"/>
    <property type="evidence" value="ECO:0007669"/>
    <property type="project" value="UniProtKB-KW"/>
</dbReference>
<dbReference type="GO" id="GO:0006164">
    <property type="term" value="P:purine nucleotide biosynthetic process"/>
    <property type="evidence" value="ECO:0007669"/>
    <property type="project" value="UniProtKB-KW"/>
</dbReference>
<dbReference type="GO" id="GO:0035999">
    <property type="term" value="P:tetrahydrofolate interconversion"/>
    <property type="evidence" value="ECO:0007669"/>
    <property type="project" value="UniProtKB-UniRule"/>
</dbReference>
<dbReference type="CDD" id="cd01080">
    <property type="entry name" value="NAD_bind_m-THF_DH_Cyclohyd"/>
    <property type="match status" value="1"/>
</dbReference>
<dbReference type="FunFam" id="3.40.50.10860:FF:000001">
    <property type="entry name" value="Bifunctional protein FolD"/>
    <property type="match status" value="1"/>
</dbReference>
<dbReference type="FunFam" id="3.40.50.720:FF:000006">
    <property type="entry name" value="Bifunctional protein FolD"/>
    <property type="match status" value="1"/>
</dbReference>
<dbReference type="Gene3D" id="3.40.50.10860">
    <property type="entry name" value="Leucine Dehydrogenase, chain A, domain 1"/>
    <property type="match status" value="1"/>
</dbReference>
<dbReference type="Gene3D" id="3.40.50.720">
    <property type="entry name" value="NAD(P)-binding Rossmann-like Domain"/>
    <property type="match status" value="1"/>
</dbReference>
<dbReference type="HAMAP" id="MF_01576">
    <property type="entry name" value="THF_DHG_CYH"/>
    <property type="match status" value="1"/>
</dbReference>
<dbReference type="InterPro" id="IPR046346">
    <property type="entry name" value="Aminoacid_DH-like_N_sf"/>
</dbReference>
<dbReference type="InterPro" id="IPR036291">
    <property type="entry name" value="NAD(P)-bd_dom_sf"/>
</dbReference>
<dbReference type="InterPro" id="IPR000672">
    <property type="entry name" value="THF_DH/CycHdrlase"/>
</dbReference>
<dbReference type="InterPro" id="IPR020630">
    <property type="entry name" value="THF_DH/CycHdrlase_cat_dom"/>
</dbReference>
<dbReference type="InterPro" id="IPR020867">
    <property type="entry name" value="THF_DH/CycHdrlase_CS"/>
</dbReference>
<dbReference type="InterPro" id="IPR020631">
    <property type="entry name" value="THF_DH/CycHdrlase_NAD-bd_dom"/>
</dbReference>
<dbReference type="NCBIfam" id="NF008058">
    <property type="entry name" value="PRK10792.1"/>
    <property type="match status" value="1"/>
</dbReference>
<dbReference type="NCBIfam" id="NF010783">
    <property type="entry name" value="PRK14186.1"/>
    <property type="match status" value="1"/>
</dbReference>
<dbReference type="PANTHER" id="PTHR48099:SF5">
    <property type="entry name" value="C-1-TETRAHYDROFOLATE SYNTHASE, CYTOPLASMIC"/>
    <property type="match status" value="1"/>
</dbReference>
<dbReference type="PANTHER" id="PTHR48099">
    <property type="entry name" value="C-1-TETRAHYDROFOLATE SYNTHASE, CYTOPLASMIC-RELATED"/>
    <property type="match status" value="1"/>
</dbReference>
<dbReference type="Pfam" id="PF00763">
    <property type="entry name" value="THF_DHG_CYH"/>
    <property type="match status" value="1"/>
</dbReference>
<dbReference type="Pfam" id="PF02882">
    <property type="entry name" value="THF_DHG_CYH_C"/>
    <property type="match status" value="1"/>
</dbReference>
<dbReference type="PRINTS" id="PR00085">
    <property type="entry name" value="THFDHDRGNASE"/>
</dbReference>
<dbReference type="SUPFAM" id="SSF53223">
    <property type="entry name" value="Aminoacid dehydrogenase-like, N-terminal domain"/>
    <property type="match status" value="1"/>
</dbReference>
<dbReference type="SUPFAM" id="SSF51735">
    <property type="entry name" value="NAD(P)-binding Rossmann-fold domains"/>
    <property type="match status" value="1"/>
</dbReference>
<dbReference type="PROSITE" id="PS00766">
    <property type="entry name" value="THF_DHG_CYH_1"/>
    <property type="match status" value="1"/>
</dbReference>
<dbReference type="PROSITE" id="PS00767">
    <property type="entry name" value="THF_DHG_CYH_2"/>
    <property type="match status" value="1"/>
</dbReference>
<accession>Q5E3Y1</accession>
<name>FOLD_ALIF1</name>
<gene>
    <name evidence="1" type="primary">folD</name>
    <name type="ordered locus">VF_1770</name>
</gene>
<feature type="chain" id="PRO_0000268557" description="Bifunctional protein FolD">
    <location>
        <begin position="1"/>
        <end position="285"/>
    </location>
</feature>
<feature type="binding site" evidence="1">
    <location>
        <begin position="166"/>
        <end position="168"/>
    </location>
    <ligand>
        <name>NADP(+)</name>
        <dbReference type="ChEBI" id="CHEBI:58349"/>
    </ligand>
</feature>
<feature type="binding site" evidence="1">
    <location>
        <position position="232"/>
    </location>
    <ligand>
        <name>NADP(+)</name>
        <dbReference type="ChEBI" id="CHEBI:58349"/>
    </ligand>
</feature>
<proteinExistence type="inferred from homology"/>
<sequence>MTAQIIDGKLISQTVRSEVGARVKARVEAGLRAPGLAVVLVGQDPASQVYVGSKRRACEEVGFVSKSYDLPTTTSESELLNLIDELNQDPEIDGILVQLPLPAGMDSTKILEHIDPEKDVDGFHPYNVGRLSQRIPKLRSCTPKGIITLLDRYNIQVRGMHAVVVGASNIVGRPMTLELLLAGCTTTTCHRFTKDLESHIRQADLVVVAVGKPNFIPGEWIKEGAVVVDVGINRLDSGKLIGDVEYDVAKTKASYITPVPGGVGPMTVATLIENTLLACEQYHSK</sequence>
<organism>
    <name type="scientific">Aliivibrio fischeri (strain ATCC 700601 / ES114)</name>
    <name type="common">Vibrio fischeri</name>
    <dbReference type="NCBI Taxonomy" id="312309"/>
    <lineage>
        <taxon>Bacteria</taxon>
        <taxon>Pseudomonadati</taxon>
        <taxon>Pseudomonadota</taxon>
        <taxon>Gammaproteobacteria</taxon>
        <taxon>Vibrionales</taxon>
        <taxon>Vibrionaceae</taxon>
        <taxon>Aliivibrio</taxon>
    </lineage>
</organism>
<reference key="1">
    <citation type="journal article" date="2005" name="Proc. Natl. Acad. Sci. U.S.A.">
        <title>Complete genome sequence of Vibrio fischeri: a symbiotic bacterium with pathogenic congeners.</title>
        <authorList>
            <person name="Ruby E.G."/>
            <person name="Urbanowski M."/>
            <person name="Campbell J."/>
            <person name="Dunn A."/>
            <person name="Faini M."/>
            <person name="Gunsalus R."/>
            <person name="Lostroh P."/>
            <person name="Lupp C."/>
            <person name="McCann J."/>
            <person name="Millikan D."/>
            <person name="Schaefer A."/>
            <person name="Stabb E."/>
            <person name="Stevens A."/>
            <person name="Visick K."/>
            <person name="Whistler C."/>
            <person name="Greenberg E.P."/>
        </authorList>
    </citation>
    <scope>NUCLEOTIDE SEQUENCE [LARGE SCALE GENOMIC DNA]</scope>
    <source>
        <strain>ATCC 700601 / ES114</strain>
    </source>
</reference>